<dbReference type="EC" id="1.2.1.88" evidence="1"/>
<dbReference type="EMBL" id="CP000736">
    <property type="protein sequence ID" value="ABR53453.1"/>
    <property type="molecule type" value="Genomic_DNA"/>
</dbReference>
<dbReference type="SMR" id="A6U4T5"/>
<dbReference type="KEGG" id="sah:SaurJH1_2630"/>
<dbReference type="HOGENOM" id="CLU_005391_0_0_9"/>
<dbReference type="UniPathway" id="UPA00261">
    <property type="reaction ID" value="UER00374"/>
</dbReference>
<dbReference type="GO" id="GO:0009898">
    <property type="term" value="C:cytoplasmic side of plasma membrane"/>
    <property type="evidence" value="ECO:0007669"/>
    <property type="project" value="TreeGrafter"/>
</dbReference>
<dbReference type="GO" id="GO:0003842">
    <property type="term" value="F:1-pyrroline-5-carboxylate dehydrogenase activity"/>
    <property type="evidence" value="ECO:0007669"/>
    <property type="project" value="UniProtKB-UniRule"/>
</dbReference>
<dbReference type="GO" id="GO:0006537">
    <property type="term" value="P:glutamate biosynthetic process"/>
    <property type="evidence" value="ECO:0007669"/>
    <property type="project" value="UniProtKB-UniRule"/>
</dbReference>
<dbReference type="GO" id="GO:0010133">
    <property type="term" value="P:proline catabolic process to glutamate"/>
    <property type="evidence" value="ECO:0007669"/>
    <property type="project" value="UniProtKB-UniPathway"/>
</dbReference>
<dbReference type="CDD" id="cd07124">
    <property type="entry name" value="ALDH_PutA-P5CDH-RocA"/>
    <property type="match status" value="1"/>
</dbReference>
<dbReference type="FunFam" id="3.40.309.10:FF:000005">
    <property type="entry name" value="1-pyrroline-5-carboxylate dehydrogenase 1"/>
    <property type="match status" value="1"/>
</dbReference>
<dbReference type="FunFam" id="3.40.605.10:FF:000045">
    <property type="entry name" value="1-pyrroline-5-carboxylate dehydrogenase 1"/>
    <property type="match status" value="1"/>
</dbReference>
<dbReference type="Gene3D" id="3.40.605.10">
    <property type="entry name" value="Aldehyde Dehydrogenase, Chain A, domain 1"/>
    <property type="match status" value="1"/>
</dbReference>
<dbReference type="Gene3D" id="3.40.309.10">
    <property type="entry name" value="Aldehyde Dehydrogenase, Chain A, domain 2"/>
    <property type="match status" value="1"/>
</dbReference>
<dbReference type="HAMAP" id="MF_00733">
    <property type="entry name" value="RocA"/>
    <property type="match status" value="1"/>
</dbReference>
<dbReference type="InterPro" id="IPR016161">
    <property type="entry name" value="Ald_DH/histidinol_DH"/>
</dbReference>
<dbReference type="InterPro" id="IPR016163">
    <property type="entry name" value="Ald_DH_C"/>
</dbReference>
<dbReference type="InterPro" id="IPR016160">
    <property type="entry name" value="Ald_DH_CS_CYS"/>
</dbReference>
<dbReference type="InterPro" id="IPR029510">
    <property type="entry name" value="Ald_DH_CS_GLU"/>
</dbReference>
<dbReference type="InterPro" id="IPR016162">
    <property type="entry name" value="Ald_DH_N"/>
</dbReference>
<dbReference type="InterPro" id="IPR015590">
    <property type="entry name" value="Aldehyde_DH_dom"/>
</dbReference>
<dbReference type="InterPro" id="IPR050485">
    <property type="entry name" value="Proline_metab_enzyme"/>
</dbReference>
<dbReference type="InterPro" id="IPR005932">
    <property type="entry name" value="RocA"/>
</dbReference>
<dbReference type="InterPro" id="IPR047597">
    <property type="entry name" value="RocA_bacillales"/>
</dbReference>
<dbReference type="NCBIfam" id="TIGR01237">
    <property type="entry name" value="D1pyr5carbox2"/>
    <property type="match status" value="1"/>
</dbReference>
<dbReference type="NCBIfam" id="NF002852">
    <property type="entry name" value="PRK03137.1"/>
    <property type="match status" value="1"/>
</dbReference>
<dbReference type="PANTHER" id="PTHR42862">
    <property type="entry name" value="DELTA-1-PYRROLINE-5-CARBOXYLATE DEHYDROGENASE 1, ISOFORM A-RELATED"/>
    <property type="match status" value="1"/>
</dbReference>
<dbReference type="PANTHER" id="PTHR42862:SF1">
    <property type="entry name" value="DELTA-1-PYRROLINE-5-CARBOXYLATE DEHYDROGENASE 2, ISOFORM A-RELATED"/>
    <property type="match status" value="1"/>
</dbReference>
<dbReference type="Pfam" id="PF00171">
    <property type="entry name" value="Aldedh"/>
    <property type="match status" value="1"/>
</dbReference>
<dbReference type="SUPFAM" id="SSF53720">
    <property type="entry name" value="ALDH-like"/>
    <property type="match status" value="1"/>
</dbReference>
<dbReference type="PROSITE" id="PS00070">
    <property type="entry name" value="ALDEHYDE_DEHYDR_CYS"/>
    <property type="match status" value="1"/>
</dbReference>
<dbReference type="PROSITE" id="PS00687">
    <property type="entry name" value="ALDEHYDE_DEHYDR_GLU"/>
    <property type="match status" value="1"/>
</dbReference>
<accession>A6U4T5</accession>
<gene>
    <name evidence="1" type="primary">rocA</name>
    <name type="ordered locus">SaurJH1_2630</name>
</gene>
<proteinExistence type="inferred from homology"/>
<evidence type="ECO:0000255" key="1">
    <source>
        <dbReference type="HAMAP-Rule" id="MF_00733"/>
    </source>
</evidence>
<comment type="catalytic activity">
    <reaction evidence="1">
        <text>L-glutamate 5-semialdehyde + NAD(+) + H2O = L-glutamate + NADH + 2 H(+)</text>
        <dbReference type="Rhea" id="RHEA:30235"/>
        <dbReference type="ChEBI" id="CHEBI:15377"/>
        <dbReference type="ChEBI" id="CHEBI:15378"/>
        <dbReference type="ChEBI" id="CHEBI:29985"/>
        <dbReference type="ChEBI" id="CHEBI:57540"/>
        <dbReference type="ChEBI" id="CHEBI:57945"/>
        <dbReference type="ChEBI" id="CHEBI:58066"/>
        <dbReference type="EC" id="1.2.1.88"/>
    </reaction>
</comment>
<comment type="pathway">
    <text evidence="1">Amino-acid degradation; L-proline degradation into L-glutamate; L-glutamate from L-proline: step 2/2.</text>
</comment>
<comment type="similarity">
    <text evidence="1">Belongs to the aldehyde dehydrogenase family. RocA subfamily.</text>
</comment>
<name>ROCA_STAA2</name>
<protein>
    <recommendedName>
        <fullName evidence="1">1-pyrroline-5-carboxylate dehydrogenase</fullName>
        <shortName evidence="1">P5C dehydrogenase</shortName>
        <ecNumber evidence="1">1.2.1.88</ecNumber>
    </recommendedName>
    <alternativeName>
        <fullName evidence="1">L-glutamate gamma-semialdehyde dehydrogenase</fullName>
    </alternativeName>
</protein>
<organism>
    <name type="scientific">Staphylococcus aureus (strain JH1)</name>
    <dbReference type="NCBI Taxonomy" id="359787"/>
    <lineage>
        <taxon>Bacteria</taxon>
        <taxon>Bacillati</taxon>
        <taxon>Bacillota</taxon>
        <taxon>Bacilli</taxon>
        <taxon>Bacillales</taxon>
        <taxon>Staphylococcaceae</taxon>
        <taxon>Staphylococcus</taxon>
    </lineage>
</organism>
<keyword id="KW-0520">NAD</keyword>
<keyword id="KW-0560">Oxidoreductase</keyword>
<reference key="1">
    <citation type="submission" date="2007-06" db="EMBL/GenBank/DDBJ databases">
        <title>Complete sequence of chromosome of Staphylococcus aureus subsp. aureus JH1.</title>
        <authorList>
            <consortium name="US DOE Joint Genome Institute"/>
            <person name="Copeland A."/>
            <person name="Lucas S."/>
            <person name="Lapidus A."/>
            <person name="Barry K."/>
            <person name="Detter J.C."/>
            <person name="Glavina del Rio T."/>
            <person name="Hammon N."/>
            <person name="Israni S."/>
            <person name="Dalin E."/>
            <person name="Tice H."/>
            <person name="Pitluck S."/>
            <person name="Chain P."/>
            <person name="Malfatti S."/>
            <person name="Shin M."/>
            <person name="Vergez L."/>
            <person name="Schmutz J."/>
            <person name="Larimer F."/>
            <person name="Land M."/>
            <person name="Hauser L."/>
            <person name="Kyrpides N."/>
            <person name="Ivanova N."/>
            <person name="Tomasz A."/>
            <person name="Richardson P."/>
        </authorList>
    </citation>
    <scope>NUCLEOTIDE SEQUENCE [LARGE SCALE GENOMIC DNA]</scope>
    <source>
        <strain>JH1</strain>
    </source>
</reference>
<feature type="chain" id="PRO_1000083340" description="1-pyrroline-5-carboxylate dehydrogenase">
    <location>
        <begin position="1"/>
        <end position="514"/>
    </location>
</feature>
<feature type="active site" evidence="1">
    <location>
        <position position="286"/>
    </location>
</feature>
<feature type="active site" evidence="1">
    <location>
        <position position="320"/>
    </location>
</feature>
<sequence>MVVEFKNEPGYDFSVQENVDMFKKALKDVEKELGQDIPLVINGEKIFKDDKIKSINPADTSQVIANASKATKQDVEDAFKAANEAYKSWKTWSANDRAELMLRVSAIIRRRKAEIAAIMVYEAGKPWDEAVGDAAEGIDFIEYYARSMMDLAQGKPVLDREGEHNKYFYKSIGTGVTIPPWNFPFAIMAGTTLAPVVAGNTVLLKPAEDTPYIAYKLMEILEEAGLPKGVVNFVPGDPKEIGDYLVDHKDTHFVTFTGSRATGTRIYERSAVVQEGQNFLKRVIAEMGGKDAIVVDENIDTDMAAEAIVTSAFGFSGQKCSACSRAIVHKDVYDEVLEKSIKLTKELTLGNTVDNTYMGPVINKKQFDKIKNYIEIGKEEGKLEQGGGTDDSKGYFVEPTIISGLKSKDRIMQEEIFGPVVGFVKVNDFDEAIEVANDTDYGLTGAVITNNREHWIKAVNEFDVGNLYLNRGCTSAVVGYHPFGGFKMSGTDAKTGSPDYLLHFLEQKVVSEMF</sequence>